<organism>
    <name type="scientific">Phaseolus vulgaris</name>
    <name type="common">Kidney bean</name>
    <name type="synonym">French bean</name>
    <dbReference type="NCBI Taxonomy" id="3885"/>
    <lineage>
        <taxon>Eukaryota</taxon>
        <taxon>Viridiplantae</taxon>
        <taxon>Streptophyta</taxon>
        <taxon>Embryophyta</taxon>
        <taxon>Tracheophyta</taxon>
        <taxon>Spermatophyta</taxon>
        <taxon>Magnoliopsida</taxon>
        <taxon>eudicotyledons</taxon>
        <taxon>Gunneridae</taxon>
        <taxon>Pentapetalae</taxon>
        <taxon>rosids</taxon>
        <taxon>fabids</taxon>
        <taxon>Fabales</taxon>
        <taxon>Fabaceae</taxon>
        <taxon>Papilionoideae</taxon>
        <taxon>50 kb inversion clade</taxon>
        <taxon>NPAAA clade</taxon>
        <taxon>indigoferoid/millettioid clade</taxon>
        <taxon>Phaseoleae</taxon>
        <taxon>Phaseolus</taxon>
    </lineage>
</organism>
<accession>A4GGE3</accession>
<comment type="function">
    <text evidence="1">NDH shuttles electrons from NAD(P)H:plastoquinone, via FMN and iron-sulfur (Fe-S) centers, to quinones in the photosynthetic chain and possibly in a chloroplast respiratory chain. The immediate electron acceptor for the enzyme in this species is believed to be plastoquinone. Couples the redox reaction to proton translocation, and thus conserves the redox energy in a proton gradient (By similarity).</text>
</comment>
<comment type="catalytic activity">
    <reaction>
        <text>a plastoquinone + NADH + (n+1) H(+)(in) = a plastoquinol + NAD(+) + n H(+)(out)</text>
        <dbReference type="Rhea" id="RHEA:42608"/>
        <dbReference type="Rhea" id="RHEA-COMP:9561"/>
        <dbReference type="Rhea" id="RHEA-COMP:9562"/>
        <dbReference type="ChEBI" id="CHEBI:15378"/>
        <dbReference type="ChEBI" id="CHEBI:17757"/>
        <dbReference type="ChEBI" id="CHEBI:57540"/>
        <dbReference type="ChEBI" id="CHEBI:57945"/>
        <dbReference type="ChEBI" id="CHEBI:62192"/>
    </reaction>
</comment>
<comment type="catalytic activity">
    <reaction>
        <text>a plastoquinone + NADPH + (n+1) H(+)(in) = a plastoquinol + NADP(+) + n H(+)(out)</text>
        <dbReference type="Rhea" id="RHEA:42612"/>
        <dbReference type="Rhea" id="RHEA-COMP:9561"/>
        <dbReference type="Rhea" id="RHEA-COMP:9562"/>
        <dbReference type="ChEBI" id="CHEBI:15378"/>
        <dbReference type="ChEBI" id="CHEBI:17757"/>
        <dbReference type="ChEBI" id="CHEBI:57783"/>
        <dbReference type="ChEBI" id="CHEBI:58349"/>
        <dbReference type="ChEBI" id="CHEBI:62192"/>
    </reaction>
</comment>
<comment type="subunit">
    <text evidence="1">NDH is composed of at least 16 different subunits, 5 of which are encoded in the nucleus.</text>
</comment>
<comment type="subcellular location">
    <subcellularLocation>
        <location evidence="1">Plastid</location>
        <location evidence="1">Chloroplast thylakoid membrane</location>
        <topology evidence="1">Multi-pass membrane protein</topology>
    </subcellularLocation>
</comment>
<comment type="similarity">
    <text evidence="3">Belongs to the complex I subunit 5 family.</text>
</comment>
<dbReference type="EC" id="7.1.1.-"/>
<dbReference type="EMBL" id="DQ886273">
    <property type="protein sequence ID" value="ABH88125.1"/>
    <property type="molecule type" value="Genomic_DNA"/>
</dbReference>
<dbReference type="EMBL" id="EU196765">
    <property type="protein sequence ID" value="ABW22821.1"/>
    <property type="molecule type" value="Genomic_DNA"/>
</dbReference>
<dbReference type="RefSeq" id="YP_001122844.1">
    <property type="nucleotide sequence ID" value="NC_009259.1"/>
</dbReference>
<dbReference type="SMR" id="A4GGE3"/>
<dbReference type="GeneID" id="4961771"/>
<dbReference type="KEGG" id="pvu:4961771"/>
<dbReference type="eggNOG" id="KOG4668">
    <property type="taxonomic scope" value="Eukaryota"/>
</dbReference>
<dbReference type="PhylomeDB" id="A4GGE3"/>
<dbReference type="GO" id="GO:0009535">
    <property type="term" value="C:chloroplast thylakoid membrane"/>
    <property type="evidence" value="ECO:0007669"/>
    <property type="project" value="UniProtKB-SubCell"/>
</dbReference>
<dbReference type="GO" id="GO:0008137">
    <property type="term" value="F:NADH dehydrogenase (ubiquinone) activity"/>
    <property type="evidence" value="ECO:0007669"/>
    <property type="project" value="InterPro"/>
</dbReference>
<dbReference type="GO" id="GO:0048038">
    <property type="term" value="F:quinone binding"/>
    <property type="evidence" value="ECO:0007669"/>
    <property type="project" value="UniProtKB-KW"/>
</dbReference>
<dbReference type="GO" id="GO:0042773">
    <property type="term" value="P:ATP synthesis coupled electron transport"/>
    <property type="evidence" value="ECO:0007669"/>
    <property type="project" value="InterPro"/>
</dbReference>
<dbReference type="GO" id="GO:0015990">
    <property type="term" value="P:electron transport coupled proton transport"/>
    <property type="evidence" value="ECO:0007669"/>
    <property type="project" value="TreeGrafter"/>
</dbReference>
<dbReference type="Gene3D" id="1.20.5.2700">
    <property type="match status" value="1"/>
</dbReference>
<dbReference type="InterPro" id="IPR002128">
    <property type="entry name" value="NADH_UbQ_OxRdtase_chlpt_su5_C"/>
</dbReference>
<dbReference type="InterPro" id="IPR018393">
    <property type="entry name" value="NADHpl_OxRdtase_5_subgr"/>
</dbReference>
<dbReference type="InterPro" id="IPR001750">
    <property type="entry name" value="ND/Mrp_TM"/>
</dbReference>
<dbReference type="InterPro" id="IPR003945">
    <property type="entry name" value="NU5C-like"/>
</dbReference>
<dbReference type="InterPro" id="IPR001516">
    <property type="entry name" value="Proton_antipo_N"/>
</dbReference>
<dbReference type="NCBIfam" id="TIGR01974">
    <property type="entry name" value="NDH_I_L"/>
    <property type="match status" value="1"/>
</dbReference>
<dbReference type="NCBIfam" id="NF005141">
    <property type="entry name" value="PRK06590.1"/>
    <property type="match status" value="1"/>
</dbReference>
<dbReference type="PANTHER" id="PTHR42829">
    <property type="entry name" value="NADH-UBIQUINONE OXIDOREDUCTASE CHAIN 5"/>
    <property type="match status" value="1"/>
</dbReference>
<dbReference type="PANTHER" id="PTHR42829:SF2">
    <property type="entry name" value="NADH-UBIQUINONE OXIDOREDUCTASE CHAIN 5"/>
    <property type="match status" value="1"/>
</dbReference>
<dbReference type="Pfam" id="PF01010">
    <property type="entry name" value="Proton_antipo_C"/>
    <property type="match status" value="1"/>
</dbReference>
<dbReference type="Pfam" id="PF00361">
    <property type="entry name" value="Proton_antipo_M"/>
    <property type="match status" value="1"/>
</dbReference>
<dbReference type="Pfam" id="PF00662">
    <property type="entry name" value="Proton_antipo_N"/>
    <property type="match status" value="1"/>
</dbReference>
<dbReference type="PRINTS" id="PR01434">
    <property type="entry name" value="NADHDHGNASE5"/>
</dbReference>
<dbReference type="PRINTS" id="PR01435">
    <property type="entry name" value="NPOXDRDTASE5"/>
</dbReference>
<gene>
    <name type="primary">ndhF</name>
</gene>
<sequence>MEYTHQYSWIIPFIPFPVPMLIGVGLLLFPTATKKIRRIWAFPSILLLTIVMFFSLDLSIHQIQNSSIFQYVWSWTINNDISLEFGYLIDSLTSIMSILITTVGILVLIYSDNYMSHDQGYLRFFAYMTLFNISMLGLVTSSNLIQIYFFWELIGMCSYLLIGFWFTRPIAANACQKAFVTNRVGDFGLLLGILGIYWITGSLEFRDLFQIINNLISKNEMNLFFVTLFALLLFCGSVAKSAQFPLHVWLPDAMEGPTPISALIHAATMVAAGIFLVARLLPLFVLLPQIMNTIAFIGLITVILGATLAIAQKDIKKNLAYSTMSQLGYMMLALGMGSYRGALFHLITHAYSKALLFLGSGSIIHSMEALVGYSPAKSQNMVFMGGLTKHVPITKFFFLVGTLSLCGIPPFACFWSKDEILNDSRLYSPIVAIIACSAAALTAFYMFRIYLLVFEGYLNVHFLNFNGKKNSSFYSISLWGKKQVKLKIKNENFLLVLLKIKKNEITSFFIRKRYLHRVNQNIKNISRLFFGIMDFGMKKTACLYPNESNNTMQFSMLVLVLFTLFVGAIGISFSQGIDLDILSKLLIPFIDLLHKDSKNFVNYYEFFTNATFSLILTFWGIFIASFFYKSVYSYLKNLNLLNLFEKNFIKKKFSDHFQNIIYNWSYNHGYIDVFYEISFISSIRRLVKFNSFFDKKRIDGITNGIGITSFFLGEAIKNVGGGRISSYILLYILDILIFILIYINFVFIRY</sequence>
<evidence type="ECO:0000250" key="1"/>
<evidence type="ECO:0000255" key="2"/>
<evidence type="ECO:0000305" key="3"/>
<geneLocation type="chloroplast"/>
<keyword id="KW-0150">Chloroplast</keyword>
<keyword id="KW-0472">Membrane</keyword>
<keyword id="KW-0520">NAD</keyword>
<keyword id="KW-0521">NADP</keyword>
<keyword id="KW-0934">Plastid</keyword>
<keyword id="KW-0618">Plastoquinone</keyword>
<keyword id="KW-0874">Quinone</keyword>
<keyword id="KW-0793">Thylakoid</keyword>
<keyword id="KW-1278">Translocase</keyword>
<keyword id="KW-0812">Transmembrane</keyword>
<keyword id="KW-1133">Transmembrane helix</keyword>
<keyword id="KW-0813">Transport</keyword>
<feature type="chain" id="PRO_0000360964" description="NAD(P)H-quinone oxidoreductase subunit 5, chloroplastic">
    <location>
        <begin position="1"/>
        <end position="750"/>
    </location>
</feature>
<feature type="transmembrane region" description="Helical" evidence="2">
    <location>
        <begin position="9"/>
        <end position="29"/>
    </location>
</feature>
<feature type="transmembrane region" description="Helical" evidence="2">
    <location>
        <begin position="39"/>
        <end position="59"/>
    </location>
</feature>
<feature type="transmembrane region" description="Helical" evidence="2">
    <location>
        <begin position="89"/>
        <end position="109"/>
    </location>
</feature>
<feature type="transmembrane region" description="Helical" evidence="2">
    <location>
        <begin position="125"/>
        <end position="145"/>
    </location>
</feature>
<feature type="transmembrane region" description="Helical" evidence="2">
    <location>
        <begin position="147"/>
        <end position="167"/>
    </location>
</feature>
<feature type="transmembrane region" description="Helical" evidence="2">
    <location>
        <begin position="185"/>
        <end position="205"/>
    </location>
</feature>
<feature type="transmembrane region" description="Helical" evidence="2">
    <location>
        <begin position="219"/>
        <end position="239"/>
    </location>
</feature>
<feature type="transmembrane region" description="Helical" evidence="2">
    <location>
        <begin position="267"/>
        <end position="287"/>
    </location>
</feature>
<feature type="transmembrane region" description="Helical" evidence="2">
    <location>
        <begin position="290"/>
        <end position="310"/>
    </location>
</feature>
<feature type="transmembrane region" description="Helical" evidence="2">
    <location>
        <begin position="327"/>
        <end position="347"/>
    </location>
</feature>
<feature type="transmembrane region" description="Helical" evidence="2">
    <location>
        <begin position="354"/>
        <end position="374"/>
    </location>
</feature>
<feature type="transmembrane region" description="Helical" evidence="2">
    <location>
        <begin position="396"/>
        <end position="416"/>
    </location>
</feature>
<feature type="transmembrane region" description="Helical" evidence="2">
    <location>
        <begin position="427"/>
        <end position="447"/>
    </location>
</feature>
<feature type="transmembrane region" description="Helical" evidence="2">
    <location>
        <begin position="554"/>
        <end position="574"/>
    </location>
</feature>
<feature type="transmembrane region" description="Helical" evidence="2">
    <location>
        <begin position="606"/>
        <end position="626"/>
    </location>
</feature>
<feature type="transmembrane region" description="Helical" evidence="2">
    <location>
        <begin position="728"/>
        <end position="748"/>
    </location>
</feature>
<protein>
    <recommendedName>
        <fullName>NAD(P)H-quinone oxidoreductase subunit 5, chloroplastic</fullName>
        <ecNumber>7.1.1.-</ecNumber>
    </recommendedName>
    <alternativeName>
        <fullName>NAD(P)H dehydrogenase subunit 5</fullName>
    </alternativeName>
    <alternativeName>
        <fullName>NADH-plastoquinone oxidoreductase subunit 5</fullName>
    </alternativeName>
</protein>
<name>NU5C_PHAVU</name>
<reference key="1">
    <citation type="journal article" date="2007" name="BMC Genomics">
        <title>Rapid evolutionary change of common bean (Phaseolus vulgaris L) plastome, and the genomic diversification of legume chloroplasts.</title>
        <authorList>
            <person name="Guo X."/>
            <person name="Castillo-Ramirez S."/>
            <person name="Gonzalez V."/>
            <person name="Bustos P."/>
            <person name="Fernandez-Vazquez J.L."/>
            <person name="Santamaria R.I."/>
            <person name="Arellano J."/>
            <person name="Cevallos M.A."/>
            <person name="Davila G."/>
        </authorList>
    </citation>
    <scope>NUCLEOTIDE SEQUENCE [LARGE SCALE GENOMIC DNA]</scope>
    <source>
        <strain>cv. Negro Jamapa</strain>
    </source>
</reference>
<reference key="2">
    <citation type="submission" date="2007-10" db="EMBL/GenBank/DDBJ databases">
        <title>Complete nucleotide sequence of the plastid genome of the common bean, Phaseolus vulgaris.</title>
        <authorList>
            <person name="Moore M.J."/>
            <person name="Triplett E.W."/>
            <person name="Broughton W.J."/>
            <person name="Soltis P.S."/>
            <person name="Soltis D.E."/>
        </authorList>
    </citation>
    <scope>NUCLEOTIDE SEQUENCE [LARGE SCALE GENOMIC DNA]</scope>
</reference>
<proteinExistence type="inferred from homology"/>